<comment type="function">
    <text evidence="4">Required for spermatogenesis and is involved in the suppression of retrotransposon transcription in male germ cells.</text>
</comment>
<comment type="subcellular location">
    <subcellularLocation>
        <location evidence="3 4">Cytoplasm</location>
    </subcellularLocation>
</comment>
<comment type="tissue specificity">
    <text evidence="3">Expressed abundantly in adult testis, at moderate levels in unfertilized eggs and ovaries and weakly in embryonic stem cells.</text>
</comment>
<comment type="developmental stage">
    <text evidence="3">In the male gonad, barely detected at 13.5 dpc or at birth, detected weakly on postnatal day 14 and maximally expressed in the 4- or 7-week-old mouse testis but not detected in the epididymis of the 7-week-old mouse (at protein level). In the female gonad, low levels detected at birth (at protein level). In the adult testis, present predominantly in pachytene spermatocytes and round spermatids but not in spermatogonia, preleptotene spermatocytes or elongating spermatids (at protein level).</text>
</comment>
<comment type="disruption phenotype">
    <text evidence="4">Mutant mice grow normally and appear healthy but males are sterile due to massive germ cell apoptotic death after postnatal day 14 with meiocytes ceasing meiotic progression before the early meitoic phase. There is also increased transcription of LINE-1 and IAP retrotransposons accompanied by demethylation of their promoter regions.</text>
</comment>
<comment type="similarity">
    <text evidence="6">Belongs to the UPF0224 (FAM112) family.</text>
</comment>
<reference key="1">
    <citation type="journal article" date="2007" name="Gene Expr. Patterns">
        <title>Gene expression pattern of Cue110: a member of the uncharacterized UPF0224 gene family preferentially expressed in germ cells.</title>
        <authorList>
            <person name="Yoshimura T."/>
            <person name="Miyazaki T."/>
            <person name="Toyoda S."/>
            <person name="Miyazaki S."/>
            <person name="Tashiro F."/>
            <person name="Yamato E."/>
            <person name="Miyazaki J."/>
        </authorList>
    </citation>
    <scope>NUCLEOTIDE SEQUENCE [MRNA]</scope>
    <scope>SUBCELLULAR LOCATION</scope>
    <scope>TISSUE SPECIFICITY</scope>
    <scope>DEVELOPMENTAL STAGE</scope>
</reference>
<reference key="2">
    <citation type="journal article" date="2005" name="Science">
        <title>The transcriptional landscape of the mammalian genome.</title>
        <authorList>
            <person name="Carninci P."/>
            <person name="Kasukawa T."/>
            <person name="Katayama S."/>
            <person name="Gough J."/>
            <person name="Frith M.C."/>
            <person name="Maeda N."/>
            <person name="Oyama R."/>
            <person name="Ravasi T."/>
            <person name="Lenhard B."/>
            <person name="Wells C."/>
            <person name="Kodzius R."/>
            <person name="Shimokawa K."/>
            <person name="Bajic V.B."/>
            <person name="Brenner S.E."/>
            <person name="Batalov S."/>
            <person name="Forrest A.R."/>
            <person name="Zavolan M."/>
            <person name="Davis M.J."/>
            <person name="Wilming L.G."/>
            <person name="Aidinis V."/>
            <person name="Allen J.E."/>
            <person name="Ambesi-Impiombato A."/>
            <person name="Apweiler R."/>
            <person name="Aturaliya R.N."/>
            <person name="Bailey T.L."/>
            <person name="Bansal M."/>
            <person name="Baxter L."/>
            <person name="Beisel K.W."/>
            <person name="Bersano T."/>
            <person name="Bono H."/>
            <person name="Chalk A.M."/>
            <person name="Chiu K.P."/>
            <person name="Choudhary V."/>
            <person name="Christoffels A."/>
            <person name="Clutterbuck D.R."/>
            <person name="Crowe M.L."/>
            <person name="Dalla E."/>
            <person name="Dalrymple B.P."/>
            <person name="de Bono B."/>
            <person name="Della Gatta G."/>
            <person name="di Bernardo D."/>
            <person name="Down T."/>
            <person name="Engstrom P."/>
            <person name="Fagiolini M."/>
            <person name="Faulkner G."/>
            <person name="Fletcher C.F."/>
            <person name="Fukushima T."/>
            <person name="Furuno M."/>
            <person name="Futaki S."/>
            <person name="Gariboldi M."/>
            <person name="Georgii-Hemming P."/>
            <person name="Gingeras T.R."/>
            <person name="Gojobori T."/>
            <person name="Green R.E."/>
            <person name="Gustincich S."/>
            <person name="Harbers M."/>
            <person name="Hayashi Y."/>
            <person name="Hensch T.K."/>
            <person name="Hirokawa N."/>
            <person name="Hill D."/>
            <person name="Huminiecki L."/>
            <person name="Iacono M."/>
            <person name="Ikeo K."/>
            <person name="Iwama A."/>
            <person name="Ishikawa T."/>
            <person name="Jakt M."/>
            <person name="Kanapin A."/>
            <person name="Katoh M."/>
            <person name="Kawasawa Y."/>
            <person name="Kelso J."/>
            <person name="Kitamura H."/>
            <person name="Kitano H."/>
            <person name="Kollias G."/>
            <person name="Krishnan S.P."/>
            <person name="Kruger A."/>
            <person name="Kummerfeld S.K."/>
            <person name="Kurochkin I.V."/>
            <person name="Lareau L.F."/>
            <person name="Lazarevic D."/>
            <person name="Lipovich L."/>
            <person name="Liu J."/>
            <person name="Liuni S."/>
            <person name="McWilliam S."/>
            <person name="Madan Babu M."/>
            <person name="Madera M."/>
            <person name="Marchionni L."/>
            <person name="Matsuda H."/>
            <person name="Matsuzawa S."/>
            <person name="Miki H."/>
            <person name="Mignone F."/>
            <person name="Miyake S."/>
            <person name="Morris K."/>
            <person name="Mottagui-Tabar S."/>
            <person name="Mulder N."/>
            <person name="Nakano N."/>
            <person name="Nakauchi H."/>
            <person name="Ng P."/>
            <person name="Nilsson R."/>
            <person name="Nishiguchi S."/>
            <person name="Nishikawa S."/>
            <person name="Nori F."/>
            <person name="Ohara O."/>
            <person name="Okazaki Y."/>
            <person name="Orlando V."/>
            <person name="Pang K.C."/>
            <person name="Pavan W.J."/>
            <person name="Pavesi G."/>
            <person name="Pesole G."/>
            <person name="Petrovsky N."/>
            <person name="Piazza S."/>
            <person name="Reed J."/>
            <person name="Reid J.F."/>
            <person name="Ring B.Z."/>
            <person name="Ringwald M."/>
            <person name="Rost B."/>
            <person name="Ruan Y."/>
            <person name="Salzberg S.L."/>
            <person name="Sandelin A."/>
            <person name="Schneider C."/>
            <person name="Schoenbach C."/>
            <person name="Sekiguchi K."/>
            <person name="Semple C.A."/>
            <person name="Seno S."/>
            <person name="Sessa L."/>
            <person name="Sheng Y."/>
            <person name="Shibata Y."/>
            <person name="Shimada H."/>
            <person name="Shimada K."/>
            <person name="Silva D."/>
            <person name="Sinclair B."/>
            <person name="Sperling S."/>
            <person name="Stupka E."/>
            <person name="Sugiura K."/>
            <person name="Sultana R."/>
            <person name="Takenaka Y."/>
            <person name="Taki K."/>
            <person name="Tammoja K."/>
            <person name="Tan S.L."/>
            <person name="Tang S."/>
            <person name="Taylor M.S."/>
            <person name="Tegner J."/>
            <person name="Teichmann S.A."/>
            <person name="Ueda H.R."/>
            <person name="van Nimwegen E."/>
            <person name="Verardo R."/>
            <person name="Wei C.L."/>
            <person name="Yagi K."/>
            <person name="Yamanishi H."/>
            <person name="Zabarovsky E."/>
            <person name="Zhu S."/>
            <person name="Zimmer A."/>
            <person name="Hide W."/>
            <person name="Bult C."/>
            <person name="Grimmond S.M."/>
            <person name="Teasdale R.D."/>
            <person name="Liu E.T."/>
            <person name="Brusic V."/>
            <person name="Quackenbush J."/>
            <person name="Wahlestedt C."/>
            <person name="Mattick J.S."/>
            <person name="Hume D.A."/>
            <person name="Kai C."/>
            <person name="Sasaki D."/>
            <person name="Tomaru Y."/>
            <person name="Fukuda S."/>
            <person name="Kanamori-Katayama M."/>
            <person name="Suzuki M."/>
            <person name="Aoki J."/>
            <person name="Arakawa T."/>
            <person name="Iida J."/>
            <person name="Imamura K."/>
            <person name="Itoh M."/>
            <person name="Kato T."/>
            <person name="Kawaji H."/>
            <person name="Kawagashira N."/>
            <person name="Kawashima T."/>
            <person name="Kojima M."/>
            <person name="Kondo S."/>
            <person name="Konno H."/>
            <person name="Nakano K."/>
            <person name="Ninomiya N."/>
            <person name="Nishio T."/>
            <person name="Okada M."/>
            <person name="Plessy C."/>
            <person name="Shibata K."/>
            <person name="Shiraki T."/>
            <person name="Suzuki S."/>
            <person name="Tagami M."/>
            <person name="Waki K."/>
            <person name="Watahiki A."/>
            <person name="Okamura-Oho Y."/>
            <person name="Suzuki H."/>
            <person name="Kawai J."/>
            <person name="Hayashizaki Y."/>
        </authorList>
    </citation>
    <scope>NUCLEOTIDE SEQUENCE [LARGE SCALE MRNA]</scope>
    <source>
        <strain>C57BL/6J</strain>
        <tissue>Testis</tissue>
    </source>
</reference>
<reference key="3">
    <citation type="journal article" date="2009" name="Dev. Biol.">
        <title>Gtsf1/Cue110, a gene encoding a protein with two copies of a CHHC Zn-finger motif, is involved in spermatogenesis and retrotransposon suppression in murine testes.</title>
        <authorList>
            <person name="Yoshimura T."/>
            <person name="Toyoda S."/>
            <person name="Kuramochi-Miyagawa S."/>
            <person name="Miyazaki T."/>
            <person name="Miyazaki S."/>
            <person name="Tashiro F."/>
            <person name="Yamato E."/>
            <person name="Nakano T."/>
            <person name="Miyazaki J."/>
        </authorList>
    </citation>
    <scope>FUNCTION</scope>
    <scope>SUBCELLULAR LOCATION</scope>
    <scope>DISRUPTION PHENOTYPE</scope>
</reference>
<reference key="4">
    <citation type="journal article" date="2010" name="Cell">
        <title>A tissue-specific atlas of mouse protein phosphorylation and expression.</title>
        <authorList>
            <person name="Huttlin E.L."/>
            <person name="Jedrychowski M.P."/>
            <person name="Elias J.E."/>
            <person name="Goswami T."/>
            <person name="Rad R."/>
            <person name="Beausoleil S.A."/>
            <person name="Villen J."/>
            <person name="Haas W."/>
            <person name="Sowa M.E."/>
            <person name="Gygi S.P."/>
        </authorList>
    </citation>
    <scope>IDENTIFICATION BY MASS SPECTROMETRY [LARGE SCALE ANALYSIS]</scope>
    <source>
        <tissue>Testis</tissue>
    </source>
</reference>
<evidence type="ECO:0000250" key="1">
    <source>
        <dbReference type="UniProtKB" id="Q8WW33"/>
    </source>
</evidence>
<evidence type="ECO:0000255" key="2">
    <source>
        <dbReference type="PROSITE-ProRule" id="PRU01141"/>
    </source>
</evidence>
<evidence type="ECO:0000269" key="3">
    <source>
    </source>
</evidence>
<evidence type="ECO:0000269" key="4">
    <source>
    </source>
</evidence>
<evidence type="ECO:0000303" key="5">
    <source>
    </source>
</evidence>
<evidence type="ECO:0000305" key="6"/>
<evidence type="ECO:0000312" key="7">
    <source>
        <dbReference type="MGI" id="MGI:1921424"/>
    </source>
</evidence>
<evidence type="ECO:0007829" key="8">
    <source>
        <dbReference type="PDB" id="6X46"/>
    </source>
</evidence>
<keyword id="KW-0002">3D-structure</keyword>
<keyword id="KW-0963">Cytoplasm</keyword>
<keyword id="KW-0221">Differentiation</keyword>
<keyword id="KW-0479">Metal-binding</keyword>
<keyword id="KW-0597">Phosphoprotein</keyword>
<keyword id="KW-1185">Reference proteome</keyword>
<keyword id="KW-0677">Repeat</keyword>
<keyword id="KW-0744">Spermatogenesis</keyword>
<keyword id="KW-0862">Zinc</keyword>
<keyword id="KW-0863">Zinc-finger</keyword>
<sequence>MEDTYIDSLDPEKLLQCPYDKNHQIRACRFPYHLIKCRKNHPDVANKLATCPFNARHQVPRAEISHHISSCDDKSCIEQDVVNQTRNLGQETLAESTWQCPPCDEDWDKDLWEQTSTPFVWGTASFCGNNSPANNIVMEHKSNLASGMRVPKSLPYVLPWKNNGNAQ</sequence>
<accession>Q9DAN6</accession>
<name>GTSF1_MOUSE</name>
<dbReference type="EMBL" id="AK005675">
    <property type="protein sequence ID" value="BAB24181.1"/>
    <property type="molecule type" value="mRNA"/>
</dbReference>
<dbReference type="CCDS" id="CCDS49744.1"/>
<dbReference type="RefSeq" id="NP_083073.1">
    <property type="nucleotide sequence ID" value="NM_028797.1"/>
</dbReference>
<dbReference type="RefSeq" id="XP_006521554.1">
    <property type="nucleotide sequence ID" value="XM_006521491.3"/>
</dbReference>
<dbReference type="RefSeq" id="XP_011244051.1">
    <property type="nucleotide sequence ID" value="XM_011245749.3"/>
</dbReference>
<dbReference type="RefSeq" id="XP_011244052.1">
    <property type="nucleotide sequence ID" value="XM_011245750.3"/>
</dbReference>
<dbReference type="RefSeq" id="XP_011244053.1">
    <property type="nucleotide sequence ID" value="XM_011245751.2"/>
</dbReference>
<dbReference type="PDB" id="6X46">
    <property type="method" value="NMR"/>
    <property type="chains" value="A=1-115"/>
</dbReference>
<dbReference type="PDBsum" id="6X46"/>
<dbReference type="SMR" id="Q9DAN6"/>
<dbReference type="FunCoup" id="Q9DAN6">
    <property type="interactions" value="452"/>
</dbReference>
<dbReference type="IntAct" id="Q9DAN6">
    <property type="interactions" value="1"/>
</dbReference>
<dbReference type="STRING" id="10090.ENSMUSP00000023129"/>
<dbReference type="PhosphoSitePlus" id="Q9DAN6"/>
<dbReference type="REPRODUCTION-2DPAGE" id="IPI00118855"/>
<dbReference type="PaxDb" id="10090-ENSMUSP00000023129"/>
<dbReference type="ProteomicsDB" id="271063"/>
<dbReference type="Antibodypedia" id="48366">
    <property type="antibodies" value="96 antibodies from 18 providers"/>
</dbReference>
<dbReference type="Ensembl" id="ENSMUST00000023129.15">
    <property type="protein sequence ID" value="ENSMUSP00000023129.9"/>
    <property type="gene ID" value="ENSMUSG00000022487.15"/>
</dbReference>
<dbReference type="Ensembl" id="ENSMUST00000136480.8">
    <property type="protein sequence ID" value="ENSMUSP00000116366.2"/>
    <property type="gene ID" value="ENSMUSG00000022487.15"/>
</dbReference>
<dbReference type="Ensembl" id="ENSMUST00000141364.8">
    <property type="protein sequence ID" value="ENSMUSP00000119234.2"/>
    <property type="gene ID" value="ENSMUSG00000022487.15"/>
</dbReference>
<dbReference type="Ensembl" id="ENSMUST00000146675.8">
    <property type="protein sequence ID" value="ENSMUSP00000122193.2"/>
    <property type="gene ID" value="ENSMUSG00000022487.15"/>
</dbReference>
<dbReference type="Ensembl" id="ENSMUST00000153930.8">
    <property type="protein sequence ID" value="ENSMUSP00000114244.2"/>
    <property type="gene ID" value="ENSMUSG00000022487.15"/>
</dbReference>
<dbReference type="GeneID" id="74174"/>
<dbReference type="KEGG" id="mmu:74174"/>
<dbReference type="UCSC" id="uc007xyd.2">
    <property type="organism name" value="mouse"/>
</dbReference>
<dbReference type="AGR" id="MGI:1921424"/>
<dbReference type="CTD" id="121355"/>
<dbReference type="MGI" id="MGI:1921424">
    <property type="gene designation" value="Gtsf1"/>
</dbReference>
<dbReference type="VEuPathDB" id="HostDB:ENSMUSG00000022487"/>
<dbReference type="eggNOG" id="KOG4376">
    <property type="taxonomic scope" value="Eukaryota"/>
</dbReference>
<dbReference type="GeneTree" id="ENSGT00940000156784"/>
<dbReference type="InParanoid" id="Q9DAN6"/>
<dbReference type="OMA" id="TANFCGN"/>
<dbReference type="OrthoDB" id="1185at9989"/>
<dbReference type="PhylomeDB" id="Q9DAN6"/>
<dbReference type="TreeFam" id="TF323837"/>
<dbReference type="BioGRID-ORCS" id="74174">
    <property type="hits" value="5 hits in 78 CRISPR screens"/>
</dbReference>
<dbReference type="PRO" id="PR:Q9DAN6"/>
<dbReference type="Proteomes" id="UP000000589">
    <property type="component" value="Chromosome 15"/>
</dbReference>
<dbReference type="RNAct" id="Q9DAN6">
    <property type="molecule type" value="protein"/>
</dbReference>
<dbReference type="Bgee" id="ENSMUSG00000022487">
    <property type="expression patterns" value="Expressed in seminiferous tubule of testis and 41 other cell types or tissues"/>
</dbReference>
<dbReference type="ExpressionAtlas" id="Q9DAN6">
    <property type="expression patterns" value="baseline and differential"/>
</dbReference>
<dbReference type="GO" id="GO:0005737">
    <property type="term" value="C:cytoplasm"/>
    <property type="evidence" value="ECO:0000314"/>
    <property type="project" value="MGI"/>
</dbReference>
<dbReference type="GO" id="GO:0071547">
    <property type="term" value="C:piP-body"/>
    <property type="evidence" value="ECO:0000314"/>
    <property type="project" value="FlyBase"/>
</dbReference>
<dbReference type="GO" id="GO:0000049">
    <property type="term" value="F:tRNA binding"/>
    <property type="evidence" value="ECO:0007669"/>
    <property type="project" value="Ensembl"/>
</dbReference>
<dbReference type="GO" id="GO:0008270">
    <property type="term" value="F:zinc ion binding"/>
    <property type="evidence" value="ECO:0007669"/>
    <property type="project" value="UniProtKB-KW"/>
</dbReference>
<dbReference type="GO" id="GO:0030154">
    <property type="term" value="P:cell differentiation"/>
    <property type="evidence" value="ECO:0007669"/>
    <property type="project" value="UniProtKB-KW"/>
</dbReference>
<dbReference type="GO" id="GO:0140991">
    <property type="term" value="P:piRNA-mediated gene silencing by mRNA destabilization"/>
    <property type="evidence" value="ECO:0000315"/>
    <property type="project" value="FlyBase"/>
</dbReference>
<dbReference type="GO" id="GO:0140965">
    <property type="term" value="P:secondary piRNA processing"/>
    <property type="evidence" value="ECO:0000315"/>
    <property type="project" value="FlyBase"/>
</dbReference>
<dbReference type="GO" id="GO:0007283">
    <property type="term" value="P:spermatogenesis"/>
    <property type="evidence" value="ECO:0007669"/>
    <property type="project" value="UniProtKB-KW"/>
</dbReference>
<dbReference type="InterPro" id="IPR022776">
    <property type="entry name" value="TRM13/UPF0224_CHHC_Znf_dom"/>
</dbReference>
<dbReference type="InterPro" id="IPR051591">
    <property type="entry name" value="UPF0224_FAM112_RNA_Proc"/>
</dbReference>
<dbReference type="InterPro" id="IPR036236">
    <property type="entry name" value="Znf_C2H2_sf"/>
</dbReference>
<dbReference type="PANTHER" id="PTHR21402">
    <property type="entry name" value="GAMETOCYTE SPECIFIC FACTOR 1-RELATED"/>
    <property type="match status" value="1"/>
</dbReference>
<dbReference type="PANTHER" id="PTHR21402:SF9">
    <property type="entry name" value="GAMETOCYTE-SPECIFIC FACTOR 1"/>
    <property type="match status" value="1"/>
</dbReference>
<dbReference type="Pfam" id="PF05253">
    <property type="entry name" value="zf-U11-48K"/>
    <property type="match status" value="2"/>
</dbReference>
<dbReference type="SUPFAM" id="SSF57667">
    <property type="entry name" value="beta-beta-alpha zinc fingers"/>
    <property type="match status" value="1"/>
</dbReference>
<dbReference type="PROSITE" id="PS51800">
    <property type="entry name" value="ZF_CHHC_U11_48K"/>
    <property type="match status" value="2"/>
</dbReference>
<feature type="chain" id="PRO_0000221622" description="Gametocyte-specific factor 1">
    <location>
        <begin position="1"/>
        <end position="167"/>
    </location>
</feature>
<feature type="zinc finger region" description="CHHC U11-48K-type 1" evidence="2">
    <location>
        <begin position="14"/>
        <end position="41"/>
    </location>
</feature>
<feature type="zinc finger region" description="CHHC U11-48K-type 2" evidence="2">
    <location>
        <begin position="48"/>
        <end position="75"/>
    </location>
</feature>
<feature type="binding site" evidence="2">
    <location>
        <position position="17"/>
    </location>
    <ligand>
        <name>Zn(2+)</name>
        <dbReference type="ChEBI" id="CHEBI:29105"/>
        <label>1</label>
    </ligand>
</feature>
<feature type="binding site" evidence="2">
    <location>
        <position position="23"/>
    </location>
    <ligand>
        <name>Zn(2+)</name>
        <dbReference type="ChEBI" id="CHEBI:29105"/>
        <label>1</label>
    </ligand>
</feature>
<feature type="binding site" evidence="2">
    <location>
        <position position="33"/>
    </location>
    <ligand>
        <name>Zn(2+)</name>
        <dbReference type="ChEBI" id="CHEBI:29105"/>
        <label>1</label>
    </ligand>
</feature>
<feature type="binding site" evidence="2">
    <location>
        <position position="37"/>
    </location>
    <ligand>
        <name>Zn(2+)</name>
        <dbReference type="ChEBI" id="CHEBI:29105"/>
        <label>1</label>
    </ligand>
</feature>
<feature type="binding site" evidence="2">
    <location>
        <position position="51"/>
    </location>
    <ligand>
        <name>Zn(2+)</name>
        <dbReference type="ChEBI" id="CHEBI:29105"/>
        <label>2</label>
    </ligand>
</feature>
<feature type="binding site" evidence="2">
    <location>
        <position position="57"/>
    </location>
    <ligand>
        <name>Zn(2+)</name>
        <dbReference type="ChEBI" id="CHEBI:29105"/>
        <label>2</label>
    </ligand>
</feature>
<feature type="binding site" evidence="2">
    <location>
        <position position="67"/>
    </location>
    <ligand>
        <name>Zn(2+)</name>
        <dbReference type="ChEBI" id="CHEBI:29105"/>
        <label>2</label>
    </ligand>
</feature>
<feature type="binding site" evidence="2">
    <location>
        <position position="71"/>
    </location>
    <ligand>
        <name>Zn(2+)</name>
        <dbReference type="ChEBI" id="CHEBI:29105"/>
        <label>2</label>
    </ligand>
</feature>
<feature type="modified residue" description="Phosphoserine" evidence="1">
    <location>
        <position position="8"/>
    </location>
</feature>
<feature type="strand" evidence="8">
    <location>
        <begin position="14"/>
        <end position="16"/>
    </location>
</feature>
<feature type="strand" evidence="8">
    <location>
        <begin position="24"/>
        <end position="26"/>
    </location>
</feature>
<feature type="helix" evidence="8">
    <location>
        <begin position="27"/>
        <end position="29"/>
    </location>
</feature>
<feature type="helix" evidence="8">
    <location>
        <begin position="30"/>
        <end position="39"/>
    </location>
</feature>
<feature type="helix" evidence="8">
    <location>
        <begin position="42"/>
        <end position="45"/>
    </location>
</feature>
<feature type="strand" evidence="8">
    <location>
        <begin position="48"/>
        <end position="51"/>
    </location>
</feature>
<feature type="strand" evidence="8">
    <location>
        <begin position="54"/>
        <end position="60"/>
    </location>
</feature>
<feature type="turn" evidence="8">
    <location>
        <begin position="61"/>
        <end position="63"/>
    </location>
</feature>
<feature type="helix" evidence="8">
    <location>
        <begin position="64"/>
        <end position="69"/>
    </location>
</feature>
<feature type="strand" evidence="8">
    <location>
        <begin position="72"/>
        <end position="74"/>
    </location>
</feature>
<protein>
    <recommendedName>
        <fullName evidence="7">Gametocyte-specific factor 1</fullName>
    </recommendedName>
    <alternativeName>
        <fullName>Protein FAM112B</fullName>
    </alternativeName>
</protein>
<gene>
    <name evidence="7" type="primary">Gtsf1</name>
    <name evidence="5" type="synonym">Cue110</name>
    <name evidence="7" type="synonym">Fam112b</name>
</gene>
<proteinExistence type="evidence at protein level"/>
<organism>
    <name type="scientific">Mus musculus</name>
    <name type="common">Mouse</name>
    <dbReference type="NCBI Taxonomy" id="10090"/>
    <lineage>
        <taxon>Eukaryota</taxon>
        <taxon>Metazoa</taxon>
        <taxon>Chordata</taxon>
        <taxon>Craniata</taxon>
        <taxon>Vertebrata</taxon>
        <taxon>Euteleostomi</taxon>
        <taxon>Mammalia</taxon>
        <taxon>Eutheria</taxon>
        <taxon>Euarchontoglires</taxon>
        <taxon>Glires</taxon>
        <taxon>Rodentia</taxon>
        <taxon>Myomorpha</taxon>
        <taxon>Muroidea</taxon>
        <taxon>Muridae</taxon>
        <taxon>Murinae</taxon>
        <taxon>Mus</taxon>
        <taxon>Mus</taxon>
    </lineage>
</organism>